<dbReference type="EMBL" id="AP009180">
    <property type="protein sequence ID" value="BAF35181.1"/>
    <property type="molecule type" value="Genomic_DNA"/>
</dbReference>
<dbReference type="RefSeq" id="WP_011672373.1">
    <property type="nucleotide sequence ID" value="NC_008512.1"/>
</dbReference>
<dbReference type="SMR" id="Q05FJ0"/>
<dbReference type="STRING" id="387662.CRP_150"/>
<dbReference type="KEGG" id="crp:CRP_150"/>
<dbReference type="HOGENOM" id="CLU_058591_0_2_6"/>
<dbReference type="OrthoDB" id="9806396at2"/>
<dbReference type="Proteomes" id="UP000000777">
    <property type="component" value="Chromosome"/>
</dbReference>
<dbReference type="GO" id="GO:0022627">
    <property type="term" value="C:cytosolic small ribosomal subunit"/>
    <property type="evidence" value="ECO:0007669"/>
    <property type="project" value="TreeGrafter"/>
</dbReference>
<dbReference type="GO" id="GO:0003729">
    <property type="term" value="F:mRNA binding"/>
    <property type="evidence" value="ECO:0007669"/>
    <property type="project" value="UniProtKB-UniRule"/>
</dbReference>
<dbReference type="GO" id="GO:0003735">
    <property type="term" value="F:structural constituent of ribosome"/>
    <property type="evidence" value="ECO:0007669"/>
    <property type="project" value="InterPro"/>
</dbReference>
<dbReference type="GO" id="GO:0006412">
    <property type="term" value="P:translation"/>
    <property type="evidence" value="ECO:0007669"/>
    <property type="project" value="UniProtKB-UniRule"/>
</dbReference>
<dbReference type="Gene3D" id="3.30.1140.32">
    <property type="entry name" value="Ribosomal protein S3, C-terminal domain"/>
    <property type="match status" value="1"/>
</dbReference>
<dbReference type="HAMAP" id="MF_01309_B">
    <property type="entry name" value="Ribosomal_uS3_B"/>
    <property type="match status" value="1"/>
</dbReference>
<dbReference type="InterPro" id="IPR009019">
    <property type="entry name" value="KH_sf_prok-type"/>
</dbReference>
<dbReference type="InterPro" id="IPR036419">
    <property type="entry name" value="Ribosomal_S3_C_sf"/>
</dbReference>
<dbReference type="InterPro" id="IPR005704">
    <property type="entry name" value="Ribosomal_uS3_bac-typ"/>
</dbReference>
<dbReference type="InterPro" id="IPR001351">
    <property type="entry name" value="Ribosomal_uS3_C"/>
</dbReference>
<dbReference type="InterPro" id="IPR018280">
    <property type="entry name" value="Ribosomal_uS3_CS"/>
</dbReference>
<dbReference type="NCBIfam" id="TIGR01009">
    <property type="entry name" value="rpsC_bact"/>
    <property type="match status" value="1"/>
</dbReference>
<dbReference type="PANTHER" id="PTHR11760">
    <property type="entry name" value="30S/40S RIBOSOMAL PROTEIN S3"/>
    <property type="match status" value="1"/>
</dbReference>
<dbReference type="PANTHER" id="PTHR11760:SF19">
    <property type="entry name" value="SMALL RIBOSOMAL SUBUNIT PROTEIN US3C"/>
    <property type="match status" value="1"/>
</dbReference>
<dbReference type="Pfam" id="PF00189">
    <property type="entry name" value="Ribosomal_S3_C"/>
    <property type="match status" value="1"/>
</dbReference>
<dbReference type="SUPFAM" id="SSF54814">
    <property type="entry name" value="Prokaryotic type KH domain (KH-domain type II)"/>
    <property type="match status" value="1"/>
</dbReference>
<dbReference type="SUPFAM" id="SSF54821">
    <property type="entry name" value="Ribosomal protein S3 C-terminal domain"/>
    <property type="match status" value="1"/>
</dbReference>
<dbReference type="PROSITE" id="PS00548">
    <property type="entry name" value="RIBOSOMAL_S3"/>
    <property type="match status" value="1"/>
</dbReference>
<gene>
    <name evidence="1" type="primary">rpsC</name>
    <name type="ordered locus">CRP_150</name>
</gene>
<comment type="function">
    <text evidence="1">Binds the lower part of the 30S subunit head. Binds mRNA in the 70S ribosome, positioning it for translation.</text>
</comment>
<comment type="subunit">
    <text evidence="1">Part of the 30S ribosomal subunit. Forms a tight complex with proteins S10 and S14.</text>
</comment>
<comment type="similarity">
    <text evidence="1">Belongs to the universal ribosomal protein uS3 family.</text>
</comment>
<protein>
    <recommendedName>
        <fullName evidence="1">Small ribosomal subunit protein uS3</fullName>
    </recommendedName>
    <alternativeName>
        <fullName evidence="2">30S ribosomal protein S3</fullName>
    </alternativeName>
</protein>
<feature type="chain" id="PRO_0000293770" description="Small ribosomal subunit protein uS3">
    <location>
        <begin position="1"/>
        <end position="203"/>
    </location>
</feature>
<organism>
    <name type="scientific">Carsonella ruddii (strain PV)</name>
    <dbReference type="NCBI Taxonomy" id="387662"/>
    <lineage>
        <taxon>Bacteria</taxon>
        <taxon>Pseudomonadati</taxon>
        <taxon>Pseudomonadota</taxon>
        <taxon>Gammaproteobacteria</taxon>
        <taxon>Oceanospirillales</taxon>
        <taxon>Halomonadaceae</taxon>
        <taxon>Zymobacter group</taxon>
        <taxon>Candidatus Carsonella</taxon>
    </lineage>
</organism>
<reference key="1">
    <citation type="journal article" date="2006" name="Science">
        <title>The 160-kilobase genome of the bacterial endosymbiont Carsonella.</title>
        <authorList>
            <person name="Nakabachi A."/>
            <person name="Yamashita A."/>
            <person name="Toh H."/>
            <person name="Ishikawa H."/>
            <person name="Dunbar H.E."/>
            <person name="Moran N.A."/>
            <person name="Hattori M."/>
        </authorList>
    </citation>
    <scope>NUCLEOTIDE SEQUENCE [LARGE SCALE GENOMIC DNA]</scope>
    <source>
        <strain>PV</strain>
    </source>
</reference>
<accession>Q05FJ0</accession>
<name>RS3_CARRP</name>
<keyword id="KW-0687">Ribonucleoprotein</keyword>
<keyword id="KW-0689">Ribosomal protein</keyword>
<evidence type="ECO:0000255" key="1">
    <source>
        <dbReference type="HAMAP-Rule" id="MF_01309"/>
    </source>
</evidence>
<evidence type="ECO:0000305" key="2"/>
<proteinExistence type="inferred from homology"/>
<sequence>MGKKINPILFRLKKNTVYHSLWYTFKKNFCYYLKCDILIREIIRRNFLFINLSYIDIIISNKLTINLYINNVDQFNIIENYLDVFVFQISKILKKNVILNFVFNHVLNAKNIAYNVVNQILNKNSIKKIIKEELLKNRKNFGCKIQISGRLEGVDIARKEWSLIGRIPLHTIKYNLEYYQCETLTQYGILGVKIWLFKKNNEK</sequence>